<evidence type="ECO:0000255" key="1">
    <source>
        <dbReference type="HAMAP-Rule" id="MF_00909"/>
    </source>
</evidence>
<evidence type="ECO:0000269" key="2">
    <source>
    </source>
</evidence>
<evidence type="ECO:0000305" key="3"/>
<protein>
    <recommendedName>
        <fullName evidence="1">Cell division protein FtsZ</fullName>
    </recommendedName>
</protein>
<keyword id="KW-0131">Cell cycle</keyword>
<keyword id="KW-0132">Cell division</keyword>
<keyword id="KW-0963">Cytoplasm</keyword>
<keyword id="KW-0342">GTP-binding</keyword>
<keyword id="KW-0547">Nucleotide-binding</keyword>
<keyword id="KW-1185">Reference proteome</keyword>
<keyword id="KW-0717">Septation</keyword>
<name>FTSZ_COXBU</name>
<accession>Q83F12</accession>
<gene>
    <name evidence="1" type="primary">ftsZ</name>
    <name type="ordered locus">CBU_0141</name>
</gene>
<proteinExistence type="evidence at protein level"/>
<reference key="1">
    <citation type="journal article" date="2003" name="Proc. Natl. Acad. Sci. U.S.A.">
        <title>Complete genome sequence of the Q-fever pathogen, Coxiella burnetii.</title>
        <authorList>
            <person name="Seshadri R."/>
            <person name="Paulsen I.T."/>
            <person name="Eisen J.A."/>
            <person name="Read T.D."/>
            <person name="Nelson K.E."/>
            <person name="Nelson W.C."/>
            <person name="Ward N.L."/>
            <person name="Tettelin H."/>
            <person name="Davidsen T.M."/>
            <person name="Beanan M.J."/>
            <person name="DeBoy R.T."/>
            <person name="Daugherty S.C."/>
            <person name="Brinkac L.M."/>
            <person name="Madupu R."/>
            <person name="Dodson R.J."/>
            <person name="Khouri H.M."/>
            <person name="Lee K.H."/>
            <person name="Carty H.A."/>
            <person name="Scanlan D."/>
            <person name="Heinzen R.A."/>
            <person name="Thompson H.A."/>
            <person name="Samuel J.E."/>
            <person name="Fraser C.M."/>
            <person name="Heidelberg J.F."/>
        </authorList>
    </citation>
    <scope>NUCLEOTIDE SEQUENCE [LARGE SCALE GENOMIC DNA]</scope>
    <source>
        <strain>RSA 493 / Nine Mile phase I</strain>
    </source>
</reference>
<reference key="2">
    <citation type="journal article" date="2007" name="Infect. Immun.">
        <title>Proteome and antigen profiling of Coxiella burnetii developmental forms.</title>
        <authorList>
            <person name="Coleman S.A."/>
            <person name="Fischer E.R."/>
            <person name="Cockrell D.C."/>
            <person name="Voth D.E."/>
            <person name="Howe D."/>
            <person name="Mead D.J."/>
            <person name="Samuel J.E."/>
            <person name="Heinzen R.A."/>
        </authorList>
    </citation>
    <scope>IDENTIFICATION BY MASS SPECTROMETRY</scope>
    <scope>DEVELOPMENTAL STAGE</scope>
    <source>
        <strain>Nine Mile Crazy / RSA 514</strain>
    </source>
</reference>
<organism>
    <name type="scientific">Coxiella burnetii (strain RSA 493 / Nine Mile phase I)</name>
    <dbReference type="NCBI Taxonomy" id="227377"/>
    <lineage>
        <taxon>Bacteria</taxon>
        <taxon>Pseudomonadati</taxon>
        <taxon>Pseudomonadota</taxon>
        <taxon>Gammaproteobacteria</taxon>
        <taxon>Legionellales</taxon>
        <taxon>Coxiellaceae</taxon>
        <taxon>Coxiella</taxon>
    </lineage>
</organism>
<dbReference type="EMBL" id="AE016828">
    <property type="protein sequence ID" value="AAO89705.2"/>
    <property type="status" value="ALT_INIT"/>
    <property type="molecule type" value="Genomic_DNA"/>
</dbReference>
<dbReference type="RefSeq" id="NP_819191.2">
    <property type="nucleotide sequence ID" value="NC_002971.3"/>
</dbReference>
<dbReference type="RefSeq" id="WP_011997353.1">
    <property type="nucleotide sequence ID" value="NC_002971.4"/>
</dbReference>
<dbReference type="SMR" id="Q83F12"/>
<dbReference type="STRING" id="227377.CBU_0141"/>
<dbReference type="EnsemblBacteria" id="AAO89705">
    <property type="protein sequence ID" value="AAO89705"/>
    <property type="gene ID" value="CBU_0141"/>
</dbReference>
<dbReference type="GeneID" id="1208012"/>
<dbReference type="KEGG" id="cbu:CBU_0141"/>
<dbReference type="PATRIC" id="fig|227377.7.peg.143"/>
<dbReference type="eggNOG" id="COG0206">
    <property type="taxonomic scope" value="Bacteria"/>
</dbReference>
<dbReference type="HOGENOM" id="CLU_024865_0_2_6"/>
<dbReference type="OrthoDB" id="9813375at2"/>
<dbReference type="Proteomes" id="UP000002671">
    <property type="component" value="Chromosome"/>
</dbReference>
<dbReference type="GO" id="GO:0032153">
    <property type="term" value="C:cell division site"/>
    <property type="evidence" value="ECO:0000318"/>
    <property type="project" value="GO_Central"/>
</dbReference>
<dbReference type="GO" id="GO:0005737">
    <property type="term" value="C:cytoplasm"/>
    <property type="evidence" value="ECO:0000318"/>
    <property type="project" value="GO_Central"/>
</dbReference>
<dbReference type="GO" id="GO:0005525">
    <property type="term" value="F:GTP binding"/>
    <property type="evidence" value="ECO:0000318"/>
    <property type="project" value="GO_Central"/>
</dbReference>
<dbReference type="GO" id="GO:0003924">
    <property type="term" value="F:GTPase activity"/>
    <property type="evidence" value="ECO:0000318"/>
    <property type="project" value="GO_Central"/>
</dbReference>
<dbReference type="GO" id="GO:0051301">
    <property type="term" value="P:cell division"/>
    <property type="evidence" value="ECO:0000318"/>
    <property type="project" value="GO_Central"/>
</dbReference>
<dbReference type="GO" id="GO:0000917">
    <property type="term" value="P:division septum assembly"/>
    <property type="evidence" value="ECO:0007669"/>
    <property type="project" value="UniProtKB-KW"/>
</dbReference>
<dbReference type="GO" id="GO:0043093">
    <property type="term" value="P:FtsZ-dependent cytokinesis"/>
    <property type="evidence" value="ECO:0007669"/>
    <property type="project" value="UniProtKB-UniRule"/>
</dbReference>
<dbReference type="GO" id="GO:0051258">
    <property type="term" value="P:protein polymerization"/>
    <property type="evidence" value="ECO:0007669"/>
    <property type="project" value="UniProtKB-UniRule"/>
</dbReference>
<dbReference type="CDD" id="cd02201">
    <property type="entry name" value="FtsZ_type1"/>
    <property type="match status" value="1"/>
</dbReference>
<dbReference type="FunFam" id="3.30.1330.20:FF:000004">
    <property type="entry name" value="Cell division protein FtsZ"/>
    <property type="match status" value="1"/>
</dbReference>
<dbReference type="FunFam" id="3.40.50.1440:FF:000023">
    <property type="entry name" value="Cell division protein FtsZ"/>
    <property type="match status" value="1"/>
</dbReference>
<dbReference type="Gene3D" id="3.30.1330.20">
    <property type="entry name" value="Tubulin/FtsZ, C-terminal domain"/>
    <property type="match status" value="1"/>
</dbReference>
<dbReference type="Gene3D" id="3.40.50.1440">
    <property type="entry name" value="Tubulin/FtsZ, GTPase domain"/>
    <property type="match status" value="1"/>
</dbReference>
<dbReference type="HAMAP" id="MF_00909">
    <property type="entry name" value="FtsZ"/>
    <property type="match status" value="1"/>
</dbReference>
<dbReference type="InterPro" id="IPR000158">
    <property type="entry name" value="Cell_div_FtsZ"/>
</dbReference>
<dbReference type="InterPro" id="IPR020805">
    <property type="entry name" value="Cell_div_FtsZ_CS"/>
</dbReference>
<dbReference type="InterPro" id="IPR045061">
    <property type="entry name" value="FtsZ/CetZ"/>
</dbReference>
<dbReference type="InterPro" id="IPR024757">
    <property type="entry name" value="FtsZ_C"/>
</dbReference>
<dbReference type="InterPro" id="IPR008280">
    <property type="entry name" value="Tub_FtsZ_C"/>
</dbReference>
<dbReference type="InterPro" id="IPR037103">
    <property type="entry name" value="Tubulin/FtsZ-like_C"/>
</dbReference>
<dbReference type="InterPro" id="IPR018316">
    <property type="entry name" value="Tubulin/FtsZ_2-layer-sand-dom"/>
</dbReference>
<dbReference type="InterPro" id="IPR036525">
    <property type="entry name" value="Tubulin/FtsZ_GTPase_sf"/>
</dbReference>
<dbReference type="InterPro" id="IPR003008">
    <property type="entry name" value="Tubulin_FtsZ_GTPase"/>
</dbReference>
<dbReference type="NCBIfam" id="TIGR00065">
    <property type="entry name" value="ftsZ"/>
    <property type="match status" value="1"/>
</dbReference>
<dbReference type="PANTHER" id="PTHR30314">
    <property type="entry name" value="CELL DIVISION PROTEIN FTSZ-RELATED"/>
    <property type="match status" value="1"/>
</dbReference>
<dbReference type="PANTHER" id="PTHR30314:SF3">
    <property type="entry name" value="MITOCHONDRIAL DIVISION PROTEIN FSZA"/>
    <property type="match status" value="1"/>
</dbReference>
<dbReference type="Pfam" id="PF12327">
    <property type="entry name" value="FtsZ_C"/>
    <property type="match status" value="1"/>
</dbReference>
<dbReference type="Pfam" id="PF00091">
    <property type="entry name" value="Tubulin"/>
    <property type="match status" value="1"/>
</dbReference>
<dbReference type="PRINTS" id="PR00423">
    <property type="entry name" value="CELLDVISFTSZ"/>
</dbReference>
<dbReference type="SMART" id="SM00864">
    <property type="entry name" value="Tubulin"/>
    <property type="match status" value="1"/>
</dbReference>
<dbReference type="SMART" id="SM00865">
    <property type="entry name" value="Tubulin_C"/>
    <property type="match status" value="1"/>
</dbReference>
<dbReference type="SUPFAM" id="SSF55307">
    <property type="entry name" value="Tubulin C-terminal domain-like"/>
    <property type="match status" value="1"/>
</dbReference>
<dbReference type="SUPFAM" id="SSF52490">
    <property type="entry name" value="Tubulin nucleotide-binding domain-like"/>
    <property type="match status" value="1"/>
</dbReference>
<dbReference type="PROSITE" id="PS01134">
    <property type="entry name" value="FTSZ_1"/>
    <property type="match status" value="1"/>
</dbReference>
<dbReference type="PROSITE" id="PS01135">
    <property type="entry name" value="FTSZ_2"/>
    <property type="match status" value="1"/>
</dbReference>
<sequence>MFELGETSPQNAQIKVIGIGGGGGNAIEHMIAENIDGVEFVCANTDSQALGRSNARVVLQLGDEITKGLGAGADPSVGRQAAEEARDRIREILEGTDMVFLTAGMGGGTGTGAAPIFAEVAKELGILTVAVVTKPFVFEGKKRMDVAEEGIKALGNYVDSLITIPNNKLLNVLGKNITLLNAFKAANNVLLGAVQGIADLITRPGLINVDFADVRTVMSEMGMAMMGTGVSSGENRAREAAEAAIASPLLEDVDFTGARGVLVNITAGMDLSIGEFEQVGEAVKAFASETATVVIGTVIDPDMSDELRVTVVVTGLGSHAGGGAGVPLKPVKNTKNDGTLDYHQLDRPTYMRNQEPSKRTVDLEEQRDRDFEYLDIPAFLRRLEED</sequence>
<comment type="function">
    <text evidence="1">Essential cell division protein that forms a contractile ring structure (Z ring) at the future cell division site. The regulation of the ring assembly controls the timing and the location of cell division. One of the functions of the FtsZ ring is to recruit other cell division proteins to the septum to produce a new cell wall between the dividing cells. Binds GTP and shows GTPase activity.</text>
</comment>
<comment type="subunit">
    <text evidence="1">Homodimer. Polymerizes to form a dynamic ring structure in a strictly GTP-dependent manner. Interacts directly with several other division proteins.</text>
</comment>
<comment type="subcellular location">
    <subcellularLocation>
        <location evidence="1">Cytoplasm</location>
    </subcellularLocation>
    <text evidence="1">Assembles at midcell at the inner surface of the cytoplasmic membrane.</text>
</comment>
<comment type="developmental stage">
    <text evidence="2">More than twofold more abundant in the large cell variant (LCV) stage than in the small cell variant (SCV) stage (at protein level). LCVs are more metabolically active than SCVs.</text>
</comment>
<comment type="similarity">
    <text evidence="1">Belongs to the FtsZ family.</text>
</comment>
<comment type="sequence caution" evidence="3">
    <conflict type="erroneous initiation">
        <sequence resource="EMBL-CDS" id="AAO89705"/>
    </conflict>
</comment>
<feature type="chain" id="PRO_0000322125" description="Cell division protein FtsZ">
    <location>
        <begin position="1"/>
        <end position="386"/>
    </location>
</feature>
<feature type="binding site" evidence="1">
    <location>
        <begin position="21"/>
        <end position="25"/>
    </location>
    <ligand>
        <name>GTP</name>
        <dbReference type="ChEBI" id="CHEBI:37565"/>
    </ligand>
</feature>
<feature type="binding site" evidence="1">
    <location>
        <begin position="108"/>
        <end position="110"/>
    </location>
    <ligand>
        <name>GTP</name>
        <dbReference type="ChEBI" id="CHEBI:37565"/>
    </ligand>
</feature>
<feature type="binding site" evidence="1">
    <location>
        <position position="139"/>
    </location>
    <ligand>
        <name>GTP</name>
        <dbReference type="ChEBI" id="CHEBI:37565"/>
    </ligand>
</feature>
<feature type="binding site" evidence="1">
    <location>
        <position position="143"/>
    </location>
    <ligand>
        <name>GTP</name>
        <dbReference type="ChEBI" id="CHEBI:37565"/>
    </ligand>
</feature>
<feature type="binding site" evidence="1">
    <location>
        <position position="187"/>
    </location>
    <ligand>
        <name>GTP</name>
        <dbReference type="ChEBI" id="CHEBI:37565"/>
    </ligand>
</feature>